<accession>P0A0Y3</accession>
<accession>A1IQP8</accession>
<accession>P17940</accession>
<dbReference type="EMBL" id="X53467">
    <property type="protein sequence ID" value="CAA37561.1"/>
    <property type="molecule type" value="Genomic_DNA"/>
</dbReference>
<dbReference type="EMBL" id="AL157959">
    <property type="protein sequence ID" value="CAM08082.1"/>
    <property type="molecule type" value="Genomic_DNA"/>
</dbReference>
<dbReference type="PIR" id="H81929">
    <property type="entry name" value="H81929"/>
</dbReference>
<dbReference type="PIR" id="S10978">
    <property type="entry name" value="B60816"/>
</dbReference>
<dbReference type="RefSeq" id="WP_002229166.1">
    <property type="nucleotide sequence ID" value="NC_003116.1"/>
</dbReference>
<dbReference type="SMR" id="P0A0Y3"/>
<dbReference type="EnsemblBacteria" id="CAM08082">
    <property type="protein sequence ID" value="CAM08082"/>
    <property type="gene ID" value="NMA0844"/>
</dbReference>
<dbReference type="KEGG" id="nma:NMA0844"/>
<dbReference type="HOGENOM" id="CLU_026974_2_0_4"/>
<dbReference type="Proteomes" id="UP000000626">
    <property type="component" value="Chromosome"/>
</dbReference>
<dbReference type="GO" id="GO:0030288">
    <property type="term" value="C:outer membrane-bounded periplasmic space"/>
    <property type="evidence" value="ECO:0007669"/>
    <property type="project" value="TreeGrafter"/>
</dbReference>
<dbReference type="GO" id="GO:0046872">
    <property type="term" value="F:metal ion binding"/>
    <property type="evidence" value="ECO:0007669"/>
    <property type="project" value="UniProtKB-KW"/>
</dbReference>
<dbReference type="GO" id="GO:0006826">
    <property type="term" value="P:iron ion transport"/>
    <property type="evidence" value="ECO:0007669"/>
    <property type="project" value="UniProtKB-KW"/>
</dbReference>
<dbReference type="GO" id="GO:0055085">
    <property type="term" value="P:transmembrane transport"/>
    <property type="evidence" value="ECO:0007669"/>
    <property type="project" value="InterPro"/>
</dbReference>
<dbReference type="CDD" id="cd13543">
    <property type="entry name" value="PBP2_Fbp"/>
    <property type="match status" value="1"/>
</dbReference>
<dbReference type="Gene3D" id="3.40.190.10">
    <property type="entry name" value="Periplasmic binding protein-like II"/>
    <property type="match status" value="2"/>
</dbReference>
<dbReference type="InterPro" id="IPR026045">
    <property type="entry name" value="Ferric-bd"/>
</dbReference>
<dbReference type="InterPro" id="IPR006059">
    <property type="entry name" value="SBP"/>
</dbReference>
<dbReference type="InterPro" id="IPR006061">
    <property type="entry name" value="SBP_1_CS"/>
</dbReference>
<dbReference type="PANTHER" id="PTHR30006:SF15">
    <property type="entry name" value="IRON-UTILIZATION PERIPLASMIC PROTEIN"/>
    <property type="match status" value="1"/>
</dbReference>
<dbReference type="PANTHER" id="PTHR30006">
    <property type="entry name" value="THIAMINE-BINDING PERIPLASMIC PROTEIN-RELATED"/>
    <property type="match status" value="1"/>
</dbReference>
<dbReference type="Pfam" id="PF01547">
    <property type="entry name" value="SBP_bac_1"/>
    <property type="match status" value="1"/>
</dbReference>
<dbReference type="PIRSF" id="PIRSF002825">
    <property type="entry name" value="CfbpA"/>
    <property type="match status" value="1"/>
</dbReference>
<dbReference type="SUPFAM" id="SSF53850">
    <property type="entry name" value="Periplasmic binding protein-like II"/>
    <property type="match status" value="1"/>
</dbReference>
<dbReference type="PROSITE" id="PS01037">
    <property type="entry name" value="SBP_BACTERIAL_1"/>
    <property type="match status" value="1"/>
</dbReference>
<proteinExistence type="evidence at protein level"/>
<organism>
    <name type="scientific">Neisseria meningitidis serogroup A / serotype 4A (strain DSM 15465 / Z2491)</name>
    <dbReference type="NCBI Taxonomy" id="122587"/>
    <lineage>
        <taxon>Bacteria</taxon>
        <taxon>Pseudomonadati</taxon>
        <taxon>Pseudomonadota</taxon>
        <taxon>Betaproteobacteria</taxon>
        <taxon>Neisseriales</taxon>
        <taxon>Neisseriaceae</taxon>
        <taxon>Neisseria</taxon>
    </lineage>
</organism>
<protein>
    <recommendedName>
        <fullName>Major ferric iron-binding protein</fullName>
        <shortName>FBP</shortName>
    </recommendedName>
    <alternativeName>
        <fullName>Iron(III) periplasmic-binding protein</fullName>
    </alternativeName>
    <alternativeName>
        <fullName>Major iron-regulated protein</fullName>
        <shortName>MIRP</shortName>
    </alternativeName>
</protein>
<sequence length="331" mass="35842">MKTSIRYALLAAALTAATPALADITVYNGQHKEAAQAVADAFTRATGIKVKLNSAKGDQLAGQIKEEGSRSPADVFYSEQIPALATLSAANLLEPLPASTINETRGKGVPVAAKKDWVALSGRSRVVVYDTRKLSEKDLEKSVLNYATPKWKNRIGYAPTSGAFLEQVVAIVKLKGEAAALKWLKGLKEYGKPYAKNSVALQAVENGEIDAALINNYYWHAFAREKGVQNVHTRLNFVRHRDPGALITYSGAAVLKSSQNKDEAKKFVAFLASKEGQRALTAVRAEYPLNPHVVSTFNLEPIAKLEAPQVSATTVSEKEHATRLLEQAGMK</sequence>
<feature type="signal peptide" evidence="2">
    <location>
        <begin position="1"/>
        <end position="22"/>
    </location>
</feature>
<feature type="chain" id="PRO_0000031691" description="Major ferric iron-binding protein">
    <location>
        <begin position="23"/>
        <end position="331"/>
    </location>
</feature>
<feature type="binding site" evidence="1">
    <location>
        <position position="31"/>
    </location>
    <ligand>
        <name>Fe cation</name>
        <dbReference type="ChEBI" id="CHEBI:24875"/>
    </ligand>
</feature>
<feature type="binding site" evidence="1">
    <location>
        <position position="79"/>
    </location>
    <ligand>
        <name>Fe cation</name>
        <dbReference type="ChEBI" id="CHEBI:24875"/>
    </ligand>
</feature>
<feature type="binding site" evidence="1">
    <location>
        <position position="217"/>
    </location>
    <ligand>
        <name>Fe cation</name>
        <dbReference type="ChEBI" id="CHEBI:24875"/>
    </ligand>
</feature>
<feature type="binding site" evidence="1">
    <location>
        <position position="218"/>
    </location>
    <ligand>
        <name>Fe cation</name>
        <dbReference type="ChEBI" id="CHEBI:24875"/>
    </ligand>
</feature>
<feature type="sequence conflict" description="In Ref. 1; CAA37561." evidence="3" ref="1">
    <original>G</original>
    <variation>A</variation>
    <location>
        <position position="186"/>
    </location>
</feature>
<feature type="sequence conflict" description="In Ref. 1; CAA37561." evidence="3" ref="1">
    <original>I</original>
    <variation>V</variation>
    <location>
        <position position="247"/>
    </location>
</feature>
<feature type="sequence conflict" description="In Ref. 1; CAA37561." evidence="3" ref="1">
    <location>
        <position position="253"/>
    </location>
</feature>
<feature type="sequence conflict" description="In Ref. 1; CAA37561." evidence="3" ref="1">
    <original>S</original>
    <variation>G</variation>
    <location>
        <position position="273"/>
    </location>
</feature>
<evidence type="ECO:0000250" key="1"/>
<evidence type="ECO:0000269" key="2">
    <source>
    </source>
</evidence>
<evidence type="ECO:0000305" key="3"/>
<name>FBPA_NEIMA</name>
<comment type="function">
    <text>This protein may be a central component in the iron-acquisition system.</text>
</comment>
<comment type="subcellular location">
    <subcellularLocation>
        <location>Periplasm</location>
    </subcellularLocation>
</comment>
<comment type="induction">
    <text>By iron deprivation.</text>
</comment>
<comment type="miscellaneous">
    <text>Iron co-purifies with FBP and is bound by the protein as a Fe(3+) ion at an approximate molar ratio of 1:1.</text>
</comment>
<comment type="similarity">
    <text evidence="3">Belongs to the bacterial solute-binding protein 1 family.</text>
</comment>
<keyword id="KW-0903">Direct protein sequencing</keyword>
<keyword id="KW-0406">Ion transport</keyword>
<keyword id="KW-0408">Iron</keyword>
<keyword id="KW-0410">Iron transport</keyword>
<keyword id="KW-0479">Metal-binding</keyword>
<keyword id="KW-0574">Periplasm</keyword>
<keyword id="KW-0732">Signal</keyword>
<keyword id="KW-0813">Transport</keyword>
<reference key="1">
    <citation type="journal article" date="1990" name="Nucleic Acids Res.">
        <title>Nucleotide sequence of the Fbp gene from Neisseria meningitidis.</title>
        <authorList>
            <person name="Berish S.A."/>
            <person name="Kapczynski D.R."/>
            <person name="Morse S.A."/>
        </authorList>
    </citation>
    <scope>NUCLEOTIDE SEQUENCE [GENOMIC DNA]</scope>
    <source>
        <strain>80084313 / Serogroup A</strain>
    </source>
</reference>
<reference key="2">
    <citation type="journal article" date="2000" name="Nature">
        <title>Complete DNA sequence of a serogroup A strain of Neisseria meningitidis Z2491.</title>
        <authorList>
            <person name="Parkhill J."/>
            <person name="Achtman M."/>
            <person name="James K.D."/>
            <person name="Bentley S.D."/>
            <person name="Churcher C.M."/>
            <person name="Klee S.R."/>
            <person name="Morelli G."/>
            <person name="Basham D."/>
            <person name="Brown D."/>
            <person name="Chillingworth T."/>
            <person name="Davies R.M."/>
            <person name="Davis P."/>
            <person name="Devlin K."/>
            <person name="Feltwell T."/>
            <person name="Hamlin N."/>
            <person name="Holroyd S."/>
            <person name="Jagels K."/>
            <person name="Leather S."/>
            <person name="Moule S."/>
            <person name="Mungall K.L."/>
            <person name="Quail M.A."/>
            <person name="Rajandream M.A."/>
            <person name="Rutherford K.M."/>
            <person name="Simmonds M."/>
            <person name="Skelton J."/>
            <person name="Whitehead S."/>
            <person name="Spratt B.G."/>
            <person name="Barrell B.G."/>
        </authorList>
    </citation>
    <scope>NUCLEOTIDE SEQUENCE [LARGE SCALE GENOMIC DNA]</scope>
    <source>
        <strain>DSM 15465 / Z2491</strain>
    </source>
</reference>
<reference key="3">
    <citation type="journal article" date="1987" name="Antonie Van Leeuwenhoek">
        <title>Characterization of the major iron-regulated protein of Neisseria gonorrhoeae and Neisseria meningitidis.</title>
        <authorList>
            <person name="Morse S.A."/>
            <person name="Mietzner T.A."/>
            <person name="Bolen G."/>
            <person name="Le Faou A."/>
            <person name="Schoolnik G."/>
        </authorList>
    </citation>
    <scope>PROTEIN SEQUENCE OF 23-69</scope>
    <source>
        <strain>80084313 / Serogroup A</strain>
    </source>
</reference>
<gene>
    <name type="primary">fbpA</name>
    <name type="synonym">fbp</name>
    <name type="ordered locus">NMA0844</name>
</gene>